<keyword id="KW-0963">Cytoplasm</keyword>
<keyword id="KW-0378">Hydrolase</keyword>
<protein>
    <recommendedName>
        <fullName evidence="1">Urease subunit gamma</fullName>
        <ecNumber evidence="1">3.5.1.5</ecNumber>
    </recommendedName>
    <alternativeName>
        <fullName evidence="1">Urea amidohydrolase subunit gamma</fullName>
    </alternativeName>
</protein>
<evidence type="ECO:0000255" key="1">
    <source>
        <dbReference type="HAMAP-Rule" id="MF_00739"/>
    </source>
</evidence>
<name>URE3_PARMW</name>
<dbReference type="EC" id="3.5.1.5" evidence="1"/>
<dbReference type="EMBL" id="BX569695">
    <property type="protein sequence ID" value="CAE08962.1"/>
    <property type="molecule type" value="Genomic_DNA"/>
</dbReference>
<dbReference type="RefSeq" id="WP_011129300.1">
    <property type="nucleotide sequence ID" value="NC_005070.1"/>
</dbReference>
<dbReference type="SMR" id="Q7U3I5"/>
<dbReference type="STRING" id="84588.SYNW2447"/>
<dbReference type="KEGG" id="syw:SYNW2447"/>
<dbReference type="eggNOG" id="COG0831">
    <property type="taxonomic scope" value="Bacteria"/>
</dbReference>
<dbReference type="HOGENOM" id="CLU_145825_1_0_3"/>
<dbReference type="UniPathway" id="UPA00258">
    <property type="reaction ID" value="UER00370"/>
</dbReference>
<dbReference type="Proteomes" id="UP000001422">
    <property type="component" value="Chromosome"/>
</dbReference>
<dbReference type="GO" id="GO:0005737">
    <property type="term" value="C:cytoplasm"/>
    <property type="evidence" value="ECO:0007669"/>
    <property type="project" value="UniProtKB-SubCell"/>
</dbReference>
<dbReference type="GO" id="GO:0016151">
    <property type="term" value="F:nickel cation binding"/>
    <property type="evidence" value="ECO:0007669"/>
    <property type="project" value="InterPro"/>
</dbReference>
<dbReference type="GO" id="GO:0009039">
    <property type="term" value="F:urease activity"/>
    <property type="evidence" value="ECO:0007669"/>
    <property type="project" value="UniProtKB-UniRule"/>
</dbReference>
<dbReference type="GO" id="GO:0043419">
    <property type="term" value="P:urea catabolic process"/>
    <property type="evidence" value="ECO:0007669"/>
    <property type="project" value="UniProtKB-UniRule"/>
</dbReference>
<dbReference type="CDD" id="cd00390">
    <property type="entry name" value="Urease_gamma"/>
    <property type="match status" value="1"/>
</dbReference>
<dbReference type="Gene3D" id="3.30.280.10">
    <property type="entry name" value="Urease, gamma-like subunit"/>
    <property type="match status" value="1"/>
</dbReference>
<dbReference type="HAMAP" id="MF_00739">
    <property type="entry name" value="Urease_gamma"/>
    <property type="match status" value="1"/>
</dbReference>
<dbReference type="InterPro" id="IPR012010">
    <property type="entry name" value="Urease_gamma"/>
</dbReference>
<dbReference type="InterPro" id="IPR002026">
    <property type="entry name" value="Urease_gamma/gamma-beta_su"/>
</dbReference>
<dbReference type="InterPro" id="IPR036463">
    <property type="entry name" value="Urease_gamma_sf"/>
</dbReference>
<dbReference type="InterPro" id="IPR050069">
    <property type="entry name" value="Urease_subunit"/>
</dbReference>
<dbReference type="NCBIfam" id="NF009712">
    <property type="entry name" value="PRK13241.1"/>
    <property type="match status" value="1"/>
</dbReference>
<dbReference type="NCBIfam" id="TIGR00193">
    <property type="entry name" value="urease_gam"/>
    <property type="match status" value="1"/>
</dbReference>
<dbReference type="PANTHER" id="PTHR33569">
    <property type="entry name" value="UREASE"/>
    <property type="match status" value="1"/>
</dbReference>
<dbReference type="PANTHER" id="PTHR33569:SF1">
    <property type="entry name" value="UREASE"/>
    <property type="match status" value="1"/>
</dbReference>
<dbReference type="Pfam" id="PF00547">
    <property type="entry name" value="Urease_gamma"/>
    <property type="match status" value="1"/>
</dbReference>
<dbReference type="PIRSF" id="PIRSF001223">
    <property type="entry name" value="Urease_gamma"/>
    <property type="match status" value="1"/>
</dbReference>
<dbReference type="SUPFAM" id="SSF54111">
    <property type="entry name" value="Urease, gamma-subunit"/>
    <property type="match status" value="1"/>
</dbReference>
<gene>
    <name evidence="1" type="primary">ureA</name>
    <name type="ordered locus">SYNW2447</name>
</gene>
<feature type="chain" id="PRO_0000098054" description="Urease subunit gamma">
    <location>
        <begin position="1"/>
        <end position="100"/>
    </location>
</feature>
<reference key="1">
    <citation type="journal article" date="2003" name="Nature">
        <title>The genome of a motile marine Synechococcus.</title>
        <authorList>
            <person name="Palenik B."/>
            <person name="Brahamsha B."/>
            <person name="Larimer F.W."/>
            <person name="Land M.L."/>
            <person name="Hauser L."/>
            <person name="Chain P."/>
            <person name="Lamerdin J.E."/>
            <person name="Regala W."/>
            <person name="Allen E.E."/>
            <person name="McCarren J."/>
            <person name="Paulsen I.T."/>
            <person name="Dufresne A."/>
            <person name="Partensky F."/>
            <person name="Webb E.A."/>
            <person name="Waterbury J."/>
        </authorList>
    </citation>
    <scope>NUCLEOTIDE SEQUENCE [LARGE SCALE GENOMIC DNA]</scope>
    <source>
        <strain>WH8102</strain>
    </source>
</reference>
<comment type="catalytic activity">
    <reaction evidence="1">
        <text>urea + 2 H2O + H(+) = hydrogencarbonate + 2 NH4(+)</text>
        <dbReference type="Rhea" id="RHEA:20557"/>
        <dbReference type="ChEBI" id="CHEBI:15377"/>
        <dbReference type="ChEBI" id="CHEBI:15378"/>
        <dbReference type="ChEBI" id="CHEBI:16199"/>
        <dbReference type="ChEBI" id="CHEBI:17544"/>
        <dbReference type="ChEBI" id="CHEBI:28938"/>
        <dbReference type="EC" id="3.5.1.5"/>
    </reaction>
</comment>
<comment type="pathway">
    <text evidence="1">Nitrogen metabolism; urea degradation; CO(2) and NH(3) from urea (urease route): step 1/1.</text>
</comment>
<comment type="subunit">
    <text evidence="1">Heterotrimer of UreA (gamma), UreB (beta) and UreC (alpha) subunits. Three heterotrimers associate to form the active enzyme.</text>
</comment>
<comment type="subcellular location">
    <subcellularLocation>
        <location evidence="1">Cytoplasm</location>
    </subcellularLocation>
</comment>
<comment type="similarity">
    <text evidence="1">Belongs to the urease gamma subunit family.</text>
</comment>
<accession>Q7U3I5</accession>
<proteinExistence type="inferred from homology"/>
<organism>
    <name type="scientific">Parasynechococcus marenigrum (strain WH8102)</name>
    <dbReference type="NCBI Taxonomy" id="84588"/>
    <lineage>
        <taxon>Bacteria</taxon>
        <taxon>Bacillati</taxon>
        <taxon>Cyanobacteriota</taxon>
        <taxon>Cyanophyceae</taxon>
        <taxon>Synechococcales</taxon>
        <taxon>Prochlorococcaceae</taxon>
        <taxon>Parasynechococcus</taxon>
        <taxon>Parasynechococcus marenigrum</taxon>
    </lineage>
</organism>
<sequence length="100" mass="11215">MHLSPQEKDKLLIVTAALLAERRLNRGLKLNHPEAVAWLGFLVLEGARDGKSVAELMQEGTTWLRQDQVMEGVPELVHEVQIEAVFPDGTKLVTLHDPIR</sequence>